<reference key="1">
    <citation type="journal article" date="2009" name="J. Bacteriol.">
        <title>The complete genome sequence of Helicobacter pylori strain G27.</title>
        <authorList>
            <person name="Baltrus D.A."/>
            <person name="Amieva M.R."/>
            <person name="Covacci A."/>
            <person name="Lowe T.M."/>
            <person name="Merrell D.S."/>
            <person name="Ottemann K.M."/>
            <person name="Stein M."/>
            <person name="Salama N.R."/>
            <person name="Guillemin K."/>
        </authorList>
    </citation>
    <scope>NUCLEOTIDE SEQUENCE [LARGE SCALE GENOMIC DNA]</scope>
    <source>
        <strain>G27</strain>
    </source>
</reference>
<dbReference type="EMBL" id="CP001173">
    <property type="protein sequence ID" value="ACI27994.1"/>
    <property type="molecule type" value="Genomic_DNA"/>
</dbReference>
<dbReference type="RefSeq" id="WP_000090809.1">
    <property type="nucleotide sequence ID" value="NC_011333.1"/>
</dbReference>
<dbReference type="SMR" id="B5Z8U5"/>
<dbReference type="GeneID" id="93237573"/>
<dbReference type="KEGG" id="hpg:HPG27_1246"/>
<dbReference type="HOGENOM" id="CLU_103849_1_2_7"/>
<dbReference type="Proteomes" id="UP000001735">
    <property type="component" value="Chromosome"/>
</dbReference>
<dbReference type="GO" id="GO:0005829">
    <property type="term" value="C:cytosol"/>
    <property type="evidence" value="ECO:0007669"/>
    <property type="project" value="TreeGrafter"/>
</dbReference>
<dbReference type="GO" id="GO:0015935">
    <property type="term" value="C:small ribosomal subunit"/>
    <property type="evidence" value="ECO:0007669"/>
    <property type="project" value="TreeGrafter"/>
</dbReference>
<dbReference type="GO" id="GO:0019843">
    <property type="term" value="F:rRNA binding"/>
    <property type="evidence" value="ECO:0007669"/>
    <property type="project" value="UniProtKB-UniRule"/>
</dbReference>
<dbReference type="GO" id="GO:0003735">
    <property type="term" value="F:structural constituent of ribosome"/>
    <property type="evidence" value="ECO:0007669"/>
    <property type="project" value="InterPro"/>
</dbReference>
<dbReference type="GO" id="GO:0000049">
    <property type="term" value="F:tRNA binding"/>
    <property type="evidence" value="ECO:0007669"/>
    <property type="project" value="UniProtKB-UniRule"/>
</dbReference>
<dbReference type="GO" id="GO:0006412">
    <property type="term" value="P:translation"/>
    <property type="evidence" value="ECO:0007669"/>
    <property type="project" value="UniProtKB-UniRule"/>
</dbReference>
<dbReference type="FunFam" id="1.10.8.50:FF:000001">
    <property type="entry name" value="30S ribosomal protein S13"/>
    <property type="match status" value="1"/>
</dbReference>
<dbReference type="FunFam" id="4.10.910.10:FF:000001">
    <property type="entry name" value="30S ribosomal protein S13"/>
    <property type="match status" value="1"/>
</dbReference>
<dbReference type="Gene3D" id="1.10.8.50">
    <property type="match status" value="1"/>
</dbReference>
<dbReference type="Gene3D" id="4.10.910.10">
    <property type="entry name" value="30s ribosomal protein s13, domain 2"/>
    <property type="match status" value="1"/>
</dbReference>
<dbReference type="HAMAP" id="MF_01315">
    <property type="entry name" value="Ribosomal_uS13"/>
    <property type="match status" value="1"/>
</dbReference>
<dbReference type="InterPro" id="IPR027437">
    <property type="entry name" value="Rbsml_uS13_C"/>
</dbReference>
<dbReference type="InterPro" id="IPR001892">
    <property type="entry name" value="Ribosomal_uS13"/>
</dbReference>
<dbReference type="InterPro" id="IPR010979">
    <property type="entry name" value="Ribosomal_uS13-like_H2TH"/>
</dbReference>
<dbReference type="InterPro" id="IPR019980">
    <property type="entry name" value="Ribosomal_uS13_bac-type"/>
</dbReference>
<dbReference type="InterPro" id="IPR018269">
    <property type="entry name" value="Ribosomal_uS13_CS"/>
</dbReference>
<dbReference type="NCBIfam" id="TIGR03631">
    <property type="entry name" value="uS13_bact"/>
    <property type="match status" value="1"/>
</dbReference>
<dbReference type="PANTHER" id="PTHR10871">
    <property type="entry name" value="30S RIBOSOMAL PROTEIN S13/40S RIBOSOMAL PROTEIN S18"/>
    <property type="match status" value="1"/>
</dbReference>
<dbReference type="PANTHER" id="PTHR10871:SF1">
    <property type="entry name" value="SMALL RIBOSOMAL SUBUNIT PROTEIN US13M"/>
    <property type="match status" value="1"/>
</dbReference>
<dbReference type="Pfam" id="PF00416">
    <property type="entry name" value="Ribosomal_S13"/>
    <property type="match status" value="1"/>
</dbReference>
<dbReference type="PIRSF" id="PIRSF002134">
    <property type="entry name" value="Ribosomal_S13"/>
    <property type="match status" value="1"/>
</dbReference>
<dbReference type="SUPFAM" id="SSF46946">
    <property type="entry name" value="S13-like H2TH domain"/>
    <property type="match status" value="1"/>
</dbReference>
<dbReference type="PROSITE" id="PS00646">
    <property type="entry name" value="RIBOSOMAL_S13_1"/>
    <property type="match status" value="1"/>
</dbReference>
<dbReference type="PROSITE" id="PS50159">
    <property type="entry name" value="RIBOSOMAL_S13_2"/>
    <property type="match status" value="1"/>
</dbReference>
<accession>B5Z8U5</accession>
<name>RS13_HELPG</name>
<evidence type="ECO:0000255" key="1">
    <source>
        <dbReference type="HAMAP-Rule" id="MF_01315"/>
    </source>
</evidence>
<evidence type="ECO:0000256" key="2">
    <source>
        <dbReference type="SAM" id="MobiDB-lite"/>
    </source>
</evidence>
<evidence type="ECO:0000305" key="3"/>
<protein>
    <recommendedName>
        <fullName evidence="1">Small ribosomal subunit protein uS13</fullName>
    </recommendedName>
    <alternativeName>
        <fullName evidence="3">30S ribosomal protein S13</fullName>
    </alternativeName>
</protein>
<keyword id="KW-1185">Reference proteome</keyword>
<keyword id="KW-0687">Ribonucleoprotein</keyword>
<keyword id="KW-0689">Ribosomal protein</keyword>
<keyword id="KW-0694">RNA-binding</keyword>
<keyword id="KW-0699">rRNA-binding</keyword>
<keyword id="KW-0820">tRNA-binding</keyword>
<comment type="function">
    <text evidence="1">Located at the top of the head of the 30S subunit, it contacts several helices of the 16S rRNA. In the 70S ribosome it contacts the 23S rRNA (bridge B1a) and protein L5 of the 50S subunit (bridge B1b), connecting the 2 subunits; these bridges are implicated in subunit movement. Contacts the tRNAs in the A and P-sites.</text>
</comment>
<comment type="subunit">
    <text evidence="1">Part of the 30S ribosomal subunit. Forms a loose heterodimer with protein S19. Forms two bridges to the 50S subunit in the 70S ribosome.</text>
</comment>
<comment type="similarity">
    <text evidence="1">Belongs to the universal ribosomal protein uS13 family.</text>
</comment>
<proteinExistence type="inferred from homology"/>
<sequence>MARIAGVDLPKKKRVEYALTYIYGIGLKSSREILEAVGISFDKRVHELSEDEVSSIAKKIQQSYLVEGDLRKKVQMDIKSLMDLGNYRGIRHRKGLPVRGQTTKNNARTRKGKKKTVGSK</sequence>
<organism>
    <name type="scientific">Helicobacter pylori (strain G27)</name>
    <dbReference type="NCBI Taxonomy" id="563041"/>
    <lineage>
        <taxon>Bacteria</taxon>
        <taxon>Pseudomonadati</taxon>
        <taxon>Campylobacterota</taxon>
        <taxon>Epsilonproteobacteria</taxon>
        <taxon>Campylobacterales</taxon>
        <taxon>Helicobacteraceae</taxon>
        <taxon>Helicobacter</taxon>
    </lineage>
</organism>
<feature type="chain" id="PRO_1000141270" description="Small ribosomal subunit protein uS13">
    <location>
        <begin position="1"/>
        <end position="120"/>
    </location>
</feature>
<feature type="region of interest" description="Disordered" evidence="2">
    <location>
        <begin position="93"/>
        <end position="120"/>
    </location>
</feature>
<feature type="compositionally biased region" description="Basic residues" evidence="2">
    <location>
        <begin position="107"/>
        <end position="120"/>
    </location>
</feature>
<gene>
    <name evidence="1" type="primary">rpsM</name>
    <name type="ordered locus">HPG27_1246</name>
</gene>